<sequence>MFRLYFFFNVICIFLAIRSAIGGEVPDATEQKINNFLASGKDSEDLSKRAAAMWFGPRLGKRTIASELHDEMMDEIDDNPLYYSGESPQRVASEIAQGTPYVVLLLTGRVLRQPQPVFYHSTTPRLGRRDASSSNENNSRPPFAPRLGRNLPFSPRLGRSFGAPVVDNFAY</sequence>
<name>PBAN_AEDAE</name>
<accession>Q16N80</accession>
<organism>
    <name type="scientific">Aedes aegypti</name>
    <name type="common">Yellowfever mosquito</name>
    <name type="synonym">Culex aegypti</name>
    <dbReference type="NCBI Taxonomy" id="7159"/>
    <lineage>
        <taxon>Eukaryota</taxon>
        <taxon>Metazoa</taxon>
        <taxon>Ecdysozoa</taxon>
        <taxon>Arthropoda</taxon>
        <taxon>Hexapoda</taxon>
        <taxon>Insecta</taxon>
        <taxon>Pterygota</taxon>
        <taxon>Neoptera</taxon>
        <taxon>Endopterygota</taxon>
        <taxon>Diptera</taxon>
        <taxon>Nematocera</taxon>
        <taxon>Culicoidea</taxon>
        <taxon>Culicidae</taxon>
        <taxon>Culicinae</taxon>
        <taxon>Aedini</taxon>
        <taxon>Aedes</taxon>
        <taxon>Stegomyia</taxon>
    </lineage>
</organism>
<comment type="function">
    <text evidence="1 2">A hormone that controls sex pheromone production in females and pheromone responsiveness in male. Also mediates visceral muscle contractile activity (myotropic activity) (By similarity).</text>
</comment>
<comment type="subcellular location">
    <subcellularLocation>
        <location evidence="1">Secreted</location>
    </subcellularLocation>
</comment>
<comment type="similarity">
    <text evidence="3">Belongs to the pyrokinin family.</text>
</comment>
<proteinExistence type="inferred from homology"/>
<gene>
    <name evidence="1" type="primary">PBAN</name>
    <name type="ORF">AAEL012060</name>
</gene>
<keyword id="KW-0027">Amidation</keyword>
<keyword id="KW-0165">Cleavage on pair of basic residues</keyword>
<keyword id="KW-0372">Hormone</keyword>
<keyword id="KW-0527">Neuropeptide</keyword>
<keyword id="KW-1185">Reference proteome</keyword>
<keyword id="KW-0964">Secreted</keyword>
<keyword id="KW-0732">Signal</keyword>
<protein>
    <recommendedName>
        <fullName>PBAN-type neuropeptides</fullName>
    </recommendedName>
    <alternativeName>
        <fullName>Pheromone/pyrokinin biosynthesis-activating neuropeptide</fullName>
    </alternativeName>
    <component>
        <recommendedName>
            <fullName>AAAMWFGPRL-amide</fullName>
        </recommendedName>
        <alternativeName>
            <fullName>Pyrokinin-1</fullName>
        </alternativeName>
    </component>
    <component>
        <recommendedName>
            <fullName>QPQPVFYHSTTPRL-amide</fullName>
        </recommendedName>
    </component>
    <component>
        <recommendedName>
            <fullName>DASSSNENNSRPPFAPRL-amide</fullName>
        </recommendedName>
        <alternativeName>
            <fullName>Pyrokinin-2</fullName>
        </alternativeName>
    </component>
    <component>
        <recommendedName>
            <fullName>NLPFSPRL-amide</fullName>
        </recommendedName>
        <alternativeName>
            <fullName>Pyrokinin-3</fullName>
        </alternativeName>
    </component>
</protein>
<dbReference type="EMBL" id="CH477835">
    <property type="protein sequence ID" value="EAT35796.1"/>
    <property type="molecule type" value="Genomic_DNA"/>
</dbReference>
<dbReference type="RefSeq" id="XP_001662212.1">
    <property type="nucleotide sequence ID" value="XM_001662162.1"/>
</dbReference>
<dbReference type="SMR" id="Q16N80"/>
<dbReference type="STRING" id="7159.Q16N80"/>
<dbReference type="PaxDb" id="7159-AAEL012060-PA"/>
<dbReference type="GeneID" id="5575794"/>
<dbReference type="KEGG" id="aag:5575794"/>
<dbReference type="VEuPathDB" id="VectorBase:AAEL012060"/>
<dbReference type="eggNOG" id="ENOG502R349">
    <property type="taxonomic scope" value="Eukaryota"/>
</dbReference>
<dbReference type="HOGENOM" id="CLU_1541633_0_0_1"/>
<dbReference type="InParanoid" id="Q16N80"/>
<dbReference type="OMA" id="KPQPIFY"/>
<dbReference type="OrthoDB" id="6424205at2759"/>
<dbReference type="PhylomeDB" id="Q16N80"/>
<dbReference type="Proteomes" id="UP000008820">
    <property type="component" value="Unassembled WGS sequence"/>
</dbReference>
<dbReference type="Proteomes" id="UP000682892">
    <property type="component" value="Unassembled WGS sequence"/>
</dbReference>
<dbReference type="GO" id="GO:0005576">
    <property type="term" value="C:extracellular region"/>
    <property type="evidence" value="ECO:0000250"/>
    <property type="project" value="UniProtKB"/>
</dbReference>
<dbReference type="GO" id="GO:0016084">
    <property type="term" value="F:myostimulatory hormone activity"/>
    <property type="evidence" value="ECO:0000250"/>
    <property type="project" value="UniProtKB"/>
</dbReference>
<dbReference type="GO" id="GO:0005184">
    <property type="term" value="F:neuropeptide hormone activity"/>
    <property type="evidence" value="ECO:0000250"/>
    <property type="project" value="UniProtKB"/>
</dbReference>
<dbReference type="GO" id="GO:0007218">
    <property type="term" value="P:neuropeptide signaling pathway"/>
    <property type="evidence" value="ECO:0000250"/>
    <property type="project" value="UniProtKB"/>
</dbReference>
<dbReference type="GO" id="GO:0042811">
    <property type="term" value="P:pheromone biosynthetic process"/>
    <property type="evidence" value="ECO:0007669"/>
    <property type="project" value="InterPro"/>
</dbReference>
<dbReference type="InterPro" id="IPR008730">
    <property type="entry name" value="PBAN"/>
</dbReference>
<dbReference type="InterPro" id="IPR001484">
    <property type="entry name" value="Pyrokinin_CS"/>
</dbReference>
<dbReference type="Pfam" id="PF05874">
    <property type="entry name" value="PBAN"/>
    <property type="match status" value="1"/>
</dbReference>
<dbReference type="PROSITE" id="PS00539">
    <property type="entry name" value="PYROKININ"/>
    <property type="match status" value="2"/>
</dbReference>
<feature type="signal peptide" evidence="3">
    <location>
        <begin position="1"/>
        <end position="22"/>
    </location>
</feature>
<feature type="propeptide" id="PRO_0000339251" evidence="1 3">
    <location>
        <begin position="23"/>
        <end position="47"/>
    </location>
</feature>
<feature type="peptide" id="PRO_0000339252" description="AAAMWFGPRL-amide" evidence="1">
    <location>
        <begin position="50"/>
        <end position="59"/>
    </location>
</feature>
<feature type="propeptide" id="PRO_0000339253" evidence="1">
    <location>
        <begin position="63"/>
        <end position="111"/>
    </location>
</feature>
<feature type="peptide" id="PRO_0000339254" description="QPQPVFYHSTTPRL-amide" evidence="1">
    <location>
        <begin position="113"/>
        <end position="126"/>
    </location>
</feature>
<feature type="peptide" id="PRO_0000339255" description="DASSSNENNSRPPFAPRL-amide" evidence="1">
    <location>
        <begin position="130"/>
        <end position="147"/>
    </location>
</feature>
<feature type="peptide" id="PRO_0000339256" description="NLPFSPRL-amide" evidence="1">
    <location>
        <begin position="150"/>
        <end position="157"/>
    </location>
</feature>
<feature type="propeptide" id="PRO_0000339257" evidence="1">
    <location>
        <begin position="160"/>
        <end position="171"/>
    </location>
</feature>
<feature type="region of interest" description="Disordered" evidence="4">
    <location>
        <begin position="120"/>
        <end position="151"/>
    </location>
</feature>
<feature type="modified residue" description="Leucine amide" evidence="1">
    <location>
        <position position="59"/>
    </location>
</feature>
<feature type="modified residue" description="Leucine amide" evidence="1">
    <location>
        <position position="126"/>
    </location>
</feature>
<feature type="modified residue" description="Leucine amide" evidence="1">
    <location>
        <position position="147"/>
    </location>
</feature>
<feature type="modified residue" description="Leucine amide" evidence="1">
    <location>
        <position position="157"/>
    </location>
</feature>
<evidence type="ECO:0000250" key="1">
    <source>
        <dbReference type="UniProtKB" id="A8CL69"/>
    </source>
</evidence>
<evidence type="ECO:0000250" key="2">
    <source>
        <dbReference type="UniProtKB" id="P09971"/>
    </source>
</evidence>
<evidence type="ECO:0000255" key="3"/>
<evidence type="ECO:0000256" key="4">
    <source>
        <dbReference type="SAM" id="MobiDB-lite"/>
    </source>
</evidence>
<evidence type="ECO:0000312" key="5">
    <source>
        <dbReference type="EMBL" id="EAT35796.1"/>
    </source>
</evidence>
<reference evidence="5" key="1">
    <citation type="journal article" date="2007" name="Science">
        <title>Genome sequence of Aedes aegypti, a major arbovirus vector.</title>
        <authorList>
            <person name="Nene V."/>
            <person name="Wortman J.R."/>
            <person name="Lawson D."/>
            <person name="Haas B.J."/>
            <person name="Kodira C.D."/>
            <person name="Tu Z.J."/>
            <person name="Loftus B.J."/>
            <person name="Xi Z."/>
            <person name="Megy K."/>
            <person name="Grabherr M."/>
            <person name="Ren Q."/>
            <person name="Zdobnov E.M."/>
            <person name="Lobo N.F."/>
            <person name="Campbell K.S."/>
            <person name="Brown S.E."/>
            <person name="Bonaldo M.F."/>
            <person name="Zhu J."/>
            <person name="Sinkins S.P."/>
            <person name="Hogenkamp D.G."/>
            <person name="Amedeo P."/>
            <person name="Arensburger P."/>
            <person name="Atkinson P.W."/>
            <person name="Bidwell S.L."/>
            <person name="Biedler J."/>
            <person name="Birney E."/>
            <person name="Bruggner R.V."/>
            <person name="Costas J."/>
            <person name="Coy M.R."/>
            <person name="Crabtree J."/>
            <person name="Crawford M."/>
            <person name="DeBruyn B."/>
            <person name="DeCaprio D."/>
            <person name="Eiglmeier K."/>
            <person name="Eisenstadt E."/>
            <person name="El-Dorry H."/>
            <person name="Gelbart W.M."/>
            <person name="Gomes S.L."/>
            <person name="Hammond M."/>
            <person name="Hannick L.I."/>
            <person name="Hogan J.R."/>
            <person name="Holmes M.H."/>
            <person name="Jaffe D."/>
            <person name="Johnston S.J."/>
            <person name="Kennedy R.C."/>
            <person name="Koo H."/>
            <person name="Kravitz S."/>
            <person name="Kriventseva E.V."/>
            <person name="Kulp D."/>
            <person name="Labutti K."/>
            <person name="Lee E."/>
            <person name="Li S."/>
            <person name="Lovin D.D."/>
            <person name="Mao C."/>
            <person name="Mauceli E."/>
            <person name="Menck C.F."/>
            <person name="Miller J.R."/>
            <person name="Montgomery P."/>
            <person name="Mori A."/>
            <person name="Nascimento A.L."/>
            <person name="Naveira H.F."/>
            <person name="Nusbaum C."/>
            <person name="O'Leary S.B."/>
            <person name="Orvis J."/>
            <person name="Pertea M."/>
            <person name="Quesneville H."/>
            <person name="Reidenbach K.R."/>
            <person name="Rogers Y.-H.C."/>
            <person name="Roth C.W."/>
            <person name="Schneider J.R."/>
            <person name="Schatz M."/>
            <person name="Shumway M."/>
            <person name="Stanke M."/>
            <person name="Stinson E.O."/>
            <person name="Tubio J.M.C."/>
            <person name="Vanzee J.P."/>
            <person name="Verjovski-Almeida S."/>
            <person name="Werner D."/>
            <person name="White O.R."/>
            <person name="Wyder S."/>
            <person name="Zeng Q."/>
            <person name="Zhao Q."/>
            <person name="Zhao Y."/>
            <person name="Hill C.A."/>
            <person name="Raikhel A.S."/>
            <person name="Soares M.B."/>
            <person name="Knudson D.L."/>
            <person name="Lee N.H."/>
            <person name="Galagan J."/>
            <person name="Salzberg S.L."/>
            <person name="Paulsen I.T."/>
            <person name="Dimopoulos G."/>
            <person name="Collins F.H."/>
            <person name="Bruce B."/>
            <person name="Fraser-Liggett C.M."/>
            <person name="Severson D.W."/>
        </authorList>
    </citation>
    <scope>NUCLEOTIDE SEQUENCE [LARGE SCALE GENOMIC DNA]</scope>
    <source>
        <strain>LVPib12</strain>
    </source>
</reference>